<feature type="chain" id="PRO_0000422799" description="Biofilm regulator 1">
    <location>
        <begin position="1"/>
        <end position="422"/>
    </location>
</feature>
<feature type="zinc finger region" description="GATA-type" evidence="1">
    <location>
        <begin position="282"/>
        <end position="307"/>
    </location>
</feature>
<feature type="region of interest" description="Disordered" evidence="2">
    <location>
        <begin position="1"/>
        <end position="86"/>
    </location>
</feature>
<feature type="region of interest" description="Disordered" evidence="2">
    <location>
        <begin position="116"/>
        <end position="207"/>
    </location>
</feature>
<feature type="compositionally biased region" description="Low complexity" evidence="2">
    <location>
        <begin position="1"/>
        <end position="19"/>
    </location>
</feature>
<feature type="compositionally biased region" description="Low complexity" evidence="2">
    <location>
        <begin position="36"/>
        <end position="45"/>
    </location>
</feature>
<feature type="compositionally biased region" description="Polar residues" evidence="2">
    <location>
        <begin position="46"/>
        <end position="61"/>
    </location>
</feature>
<feature type="compositionally biased region" description="Low complexity" evidence="2">
    <location>
        <begin position="69"/>
        <end position="81"/>
    </location>
</feature>
<feature type="compositionally biased region" description="Low complexity" evidence="2">
    <location>
        <begin position="120"/>
        <end position="143"/>
    </location>
</feature>
<feature type="compositionally biased region" description="Polar residues" evidence="2">
    <location>
        <begin position="146"/>
        <end position="159"/>
    </location>
</feature>
<feature type="compositionally biased region" description="Low complexity" evidence="2">
    <location>
        <begin position="160"/>
        <end position="194"/>
    </location>
</feature>
<feature type="compositionally biased region" description="Polar residues" evidence="2">
    <location>
        <begin position="195"/>
        <end position="205"/>
    </location>
</feature>
<dbReference type="EMBL" id="CP017623">
    <property type="protein sequence ID" value="AOW26184.1"/>
    <property type="molecule type" value="Genomic_DNA"/>
</dbReference>
<dbReference type="RefSeq" id="XP_710725.2">
    <property type="nucleotide sequence ID" value="XM_705633.2"/>
</dbReference>
<dbReference type="SMR" id="Q59LY1"/>
<dbReference type="STRING" id="237561.Q59LY1"/>
<dbReference type="EnsemblFungi" id="C1_05140W_A-T">
    <property type="protein sequence ID" value="C1_05140W_A-T-p1"/>
    <property type="gene ID" value="C1_05140W_A"/>
</dbReference>
<dbReference type="GeneID" id="3647664"/>
<dbReference type="KEGG" id="cal:CAALFM_C105140WA"/>
<dbReference type="CGD" id="CAL0000196982">
    <property type="gene designation" value="BRG1"/>
</dbReference>
<dbReference type="VEuPathDB" id="FungiDB:C1_05140W_A"/>
<dbReference type="eggNOG" id="KOG1601">
    <property type="taxonomic scope" value="Eukaryota"/>
</dbReference>
<dbReference type="HOGENOM" id="CLU_731585_0_0_1"/>
<dbReference type="InParanoid" id="Q59LY1"/>
<dbReference type="OrthoDB" id="2162994at2759"/>
<dbReference type="PHI-base" id="PHI:10196"/>
<dbReference type="PRO" id="PR:Q59LY1"/>
<dbReference type="Proteomes" id="UP000000559">
    <property type="component" value="Chromosome 1"/>
</dbReference>
<dbReference type="GO" id="GO:0000785">
    <property type="term" value="C:chromatin"/>
    <property type="evidence" value="ECO:0000314"/>
    <property type="project" value="CGD"/>
</dbReference>
<dbReference type="GO" id="GO:0005634">
    <property type="term" value="C:nucleus"/>
    <property type="evidence" value="ECO:0000318"/>
    <property type="project" value="GO_Central"/>
</dbReference>
<dbReference type="GO" id="GO:0001216">
    <property type="term" value="F:DNA-binding transcription activator activity"/>
    <property type="evidence" value="ECO:0000315"/>
    <property type="project" value="CGD"/>
</dbReference>
<dbReference type="GO" id="GO:0043565">
    <property type="term" value="F:sequence-specific DNA binding"/>
    <property type="evidence" value="ECO:0000314"/>
    <property type="project" value="CGD"/>
</dbReference>
<dbReference type="GO" id="GO:0000976">
    <property type="term" value="F:transcription cis-regulatory region binding"/>
    <property type="evidence" value="ECO:0000318"/>
    <property type="project" value="GO_Central"/>
</dbReference>
<dbReference type="GO" id="GO:0008270">
    <property type="term" value="F:zinc ion binding"/>
    <property type="evidence" value="ECO:0007669"/>
    <property type="project" value="UniProtKB-KW"/>
</dbReference>
<dbReference type="GO" id="GO:0007155">
    <property type="term" value="P:cell adhesion"/>
    <property type="evidence" value="ECO:0007669"/>
    <property type="project" value="UniProtKB-KW"/>
</dbReference>
<dbReference type="GO" id="GO:0009267">
    <property type="term" value="P:cellular response to starvation"/>
    <property type="evidence" value="ECO:0000315"/>
    <property type="project" value="CGD"/>
</dbReference>
<dbReference type="GO" id="GO:0030447">
    <property type="term" value="P:filamentous growth"/>
    <property type="evidence" value="ECO:0000315"/>
    <property type="project" value="CGD"/>
</dbReference>
<dbReference type="GO" id="GO:0044182">
    <property type="term" value="P:filamentous growth of a population of unicellular organisms"/>
    <property type="evidence" value="ECO:0000315"/>
    <property type="project" value="CGD"/>
</dbReference>
<dbReference type="GO" id="GO:0036180">
    <property type="term" value="P:filamentous growth of a population of unicellular organisms in response to biotic stimulus"/>
    <property type="evidence" value="ECO:0000315"/>
    <property type="project" value="CGD"/>
</dbReference>
<dbReference type="GO" id="GO:0036170">
    <property type="term" value="P:filamentous growth of a population of unicellular organisms in response to starvation"/>
    <property type="evidence" value="ECO:0000315"/>
    <property type="project" value="CGD"/>
</dbReference>
<dbReference type="GO" id="GO:1900430">
    <property type="term" value="P:positive regulation of filamentous growth of a population of unicellular organisms"/>
    <property type="evidence" value="ECO:0000315"/>
    <property type="project" value="CGD"/>
</dbReference>
<dbReference type="GO" id="GO:1900445">
    <property type="term" value="P:positive regulation of filamentous growth of a population of unicellular organisms in response to biotic stimulus"/>
    <property type="evidence" value="ECO:0000315"/>
    <property type="project" value="CGD"/>
</dbReference>
<dbReference type="GO" id="GO:1900233">
    <property type="term" value="P:positive regulation of single-species biofilm formation on inanimate substrate"/>
    <property type="evidence" value="ECO:0000315"/>
    <property type="project" value="CGD"/>
</dbReference>
<dbReference type="GO" id="GO:0006357">
    <property type="term" value="P:regulation of transcription by RNA polymerase II"/>
    <property type="evidence" value="ECO:0000315"/>
    <property type="project" value="CGD"/>
</dbReference>
<dbReference type="GO" id="GO:0044011">
    <property type="term" value="P:single-species biofilm formation on inanimate substrate"/>
    <property type="evidence" value="ECO:0000315"/>
    <property type="project" value="CGD"/>
</dbReference>
<dbReference type="CDD" id="cd00202">
    <property type="entry name" value="ZnF_GATA"/>
    <property type="match status" value="1"/>
</dbReference>
<dbReference type="Gene3D" id="3.30.50.10">
    <property type="entry name" value="Erythroid Transcription Factor GATA-1, subunit A"/>
    <property type="match status" value="1"/>
</dbReference>
<dbReference type="InterPro" id="IPR000679">
    <property type="entry name" value="Znf_GATA"/>
</dbReference>
<dbReference type="InterPro" id="IPR013088">
    <property type="entry name" value="Znf_NHR/GATA"/>
</dbReference>
<dbReference type="PANTHER" id="PTHR47172:SF24">
    <property type="entry name" value="GATA ZINC FINGER DOMAIN-CONTAINING PROTEIN 14-RELATED"/>
    <property type="match status" value="1"/>
</dbReference>
<dbReference type="PANTHER" id="PTHR47172">
    <property type="entry name" value="OS01G0976800 PROTEIN"/>
    <property type="match status" value="1"/>
</dbReference>
<dbReference type="Pfam" id="PF00320">
    <property type="entry name" value="GATA"/>
    <property type="match status" value="1"/>
</dbReference>
<dbReference type="SMART" id="SM00401">
    <property type="entry name" value="ZnF_GATA"/>
    <property type="match status" value="1"/>
</dbReference>
<dbReference type="SUPFAM" id="SSF57716">
    <property type="entry name" value="Glucocorticoid receptor-like (DNA-binding domain)"/>
    <property type="match status" value="1"/>
</dbReference>
<dbReference type="PROSITE" id="PS50114">
    <property type="entry name" value="GATA_ZN_FINGER_2"/>
    <property type="match status" value="1"/>
</dbReference>
<proteinExistence type="evidence at protein level"/>
<evidence type="ECO:0000255" key="1">
    <source>
        <dbReference type="PROSITE-ProRule" id="PRU00094"/>
    </source>
</evidence>
<evidence type="ECO:0000256" key="2">
    <source>
        <dbReference type="SAM" id="MobiDB-lite"/>
    </source>
</evidence>
<evidence type="ECO:0000269" key="3">
    <source>
    </source>
</evidence>
<evidence type="ECO:0000269" key="4">
    <source>
    </source>
</evidence>
<evidence type="ECO:0000269" key="5">
    <source>
    </source>
</evidence>
<evidence type="ECO:0000269" key="6">
    <source>
    </source>
</evidence>
<evidence type="ECO:0000269" key="7">
    <source>
    </source>
</evidence>
<evidence type="ECO:0000269" key="8">
    <source>
    </source>
</evidence>
<evidence type="ECO:0000269" key="9">
    <source>
    </source>
</evidence>
<evidence type="ECO:0000269" key="10">
    <source>
    </source>
</evidence>
<evidence type="ECO:0000269" key="11">
    <source>
    </source>
</evidence>
<evidence type="ECO:0000269" key="12">
    <source>
    </source>
</evidence>
<evidence type="ECO:0000269" key="13">
    <source>
    </source>
</evidence>
<sequence>MSSSSSLSSSTTTATTTSARIRLPSISELTSRSTISGGSNNGNGSALKSQISPRLSDTSRILPSILKNTSGSSTPTSSSTPFKCPPIKSTVGGTLSSGNTQSNYVLGNTKINSLPRLSSPTLPVKVQPQQQPQLPPASSLSPVTRVINTPPQQPQSVSASTSPNTQYQYYQYQQQSSPIQQQQQQQQATPAATPTVMQMAQNQPSHPAPLQYATQQYYPQPVYYQSPAGVPPPPPSVTHQGHIIAVHQHPGHLPQVGVNGMPPNVGYTIVQPEIVNKSTNRCHRCGTTETPEWRRGPKGVRTLCNACGLFHAKLVKRKGAALAAEEVLNNKVTKGKNGRRISMKKHLLNESLKQQQQINGVGIPINGFNHQILPPSFKPQQGGIATLPPLMHGQYPNNVNNLVIHQPPPQQQQQQQQHNNIC</sequence>
<reference key="1">
    <citation type="journal article" date="2004" name="Proc. Natl. Acad. Sci. U.S.A.">
        <title>The diploid genome sequence of Candida albicans.</title>
        <authorList>
            <person name="Jones T."/>
            <person name="Federspiel N.A."/>
            <person name="Chibana H."/>
            <person name="Dungan J."/>
            <person name="Kalman S."/>
            <person name="Magee B.B."/>
            <person name="Newport G."/>
            <person name="Thorstenson Y.R."/>
            <person name="Agabian N."/>
            <person name="Magee P.T."/>
            <person name="Davis R.W."/>
            <person name="Scherer S."/>
        </authorList>
    </citation>
    <scope>NUCLEOTIDE SEQUENCE [LARGE SCALE GENOMIC DNA]</scope>
    <source>
        <strain>SC5314 / ATCC MYA-2876</strain>
    </source>
</reference>
<reference key="2">
    <citation type="journal article" date="2007" name="Genome Biol.">
        <title>Assembly of the Candida albicans genome into sixteen supercontigs aligned on the eight chromosomes.</title>
        <authorList>
            <person name="van het Hoog M."/>
            <person name="Rast T.J."/>
            <person name="Martchenko M."/>
            <person name="Grindle S."/>
            <person name="Dignard D."/>
            <person name="Hogues H."/>
            <person name="Cuomo C."/>
            <person name="Berriman M."/>
            <person name="Scherer S."/>
            <person name="Magee B.B."/>
            <person name="Whiteway M."/>
            <person name="Chibana H."/>
            <person name="Nantel A."/>
            <person name="Magee P.T."/>
        </authorList>
    </citation>
    <scope>GENOME REANNOTATION</scope>
    <source>
        <strain>SC5314 / ATCC MYA-2876</strain>
    </source>
</reference>
<reference key="3">
    <citation type="journal article" date="2013" name="Genome Biol.">
        <title>Assembly of a phased diploid Candida albicans genome facilitates allele-specific measurements and provides a simple model for repeat and indel structure.</title>
        <authorList>
            <person name="Muzzey D."/>
            <person name="Schwartz K."/>
            <person name="Weissman J.S."/>
            <person name="Sherlock G."/>
        </authorList>
    </citation>
    <scope>NUCLEOTIDE SEQUENCE [LARGE SCALE GENOMIC DNA]</scope>
    <scope>GENOME REANNOTATION</scope>
    <source>
        <strain>SC5314 / ATCC MYA-2876</strain>
    </source>
</reference>
<reference key="4">
    <citation type="journal article" date="2003" name="EMBO J.">
        <title>Haploinsufficiency-based large-scale forward genetic analysis of filamentous growth in the diploid human fungal pathogen C.albicans.</title>
        <authorList>
            <person name="Uhl M.A."/>
            <person name="Biery M."/>
            <person name="Craig N."/>
            <person name="Johnson A.D."/>
        </authorList>
    </citation>
    <scope>FUNCTION</scope>
</reference>
<reference key="5">
    <citation type="journal article" date="2008" name="Mol. Biol. Cell">
        <title>The Yak1 kinase is involved in the initiation and maintenance of hyphal growth in Candida albicans.</title>
        <authorList>
            <person name="Goyard S."/>
            <person name="Knechtle P."/>
            <person name="Chauvel M."/>
            <person name="Mallet A."/>
            <person name="Prevost M.C."/>
            <person name="Proux C."/>
            <person name="Coppee J.Y."/>
            <person name="Schwartz P."/>
            <person name="Dromer F."/>
            <person name="Park H."/>
            <person name="Filler S.G."/>
            <person name="Janbon G."/>
            <person name="d'Enfert C."/>
        </authorList>
    </citation>
    <scope>INDUCTION</scope>
</reference>
<reference key="6">
    <citation type="journal article" date="2009" name="PLoS Genet.">
        <title>A phenotypic profile of the Candida albicans regulatory network.</title>
        <authorList>
            <person name="Homann O.R."/>
            <person name="Dea J."/>
            <person name="Noble S.M."/>
            <person name="Johnson A.D."/>
        </authorList>
    </citation>
    <scope>FUNCTION</scope>
</reference>
<reference key="7">
    <citation type="journal article" date="2011" name="Mol. Microbiol.">
        <title>Contribution of the glycolytic flux and hypoxia adaptation to efficient biofilm formation by Candida albicans.</title>
        <authorList>
            <person name="Bonhomme J."/>
            <person name="Chauvel M."/>
            <person name="Goyard S."/>
            <person name="Roux P."/>
            <person name="Rossignol T."/>
            <person name="d'Enfert C."/>
        </authorList>
    </citation>
    <scope>INDUCTION</scope>
</reference>
<reference key="8">
    <citation type="journal article" date="2012" name="Mol. Microbiol.">
        <title>BRG1 and NRG1 form a novel feedback circuit regulating Candida albicans hypha formation and virulence.</title>
        <authorList>
            <person name="Cleary I.A."/>
            <person name="Lazzell A.L."/>
            <person name="Monteagudo C."/>
            <person name="Thomas D.P."/>
            <person name="Saville S.P."/>
        </authorList>
    </citation>
    <scope>FUNCTION</scope>
</reference>
<reference key="9">
    <citation type="journal article" date="2012" name="PLoS ONE">
        <title>Roles of Candida albicans Gat2, a GATA-type zinc finger transcription factor, in biofilm formation, filamentous growth and virulence.</title>
        <authorList>
            <person name="Du H."/>
            <person name="Guan G."/>
            <person name="Xie J."/>
            <person name="Sun Y."/>
            <person name="Tong Y."/>
            <person name="Zhang L."/>
            <person name="Huang G."/>
        </authorList>
    </citation>
    <scope>FUNCTION</scope>
    <scope>DISRUPTION PHENOTYPE</scope>
</reference>
<reference key="10">
    <citation type="journal article" date="2012" name="PLoS ONE">
        <title>A versatile overexpression strategy in the pathogenic yeast Candida albicans: identification of regulators of morphogenesis and fitness.</title>
        <authorList>
            <person name="Chauvel M."/>
            <person name="Nesseir A."/>
            <person name="Cabral V."/>
            <person name="Znaidi S."/>
            <person name="Goyard S."/>
            <person name="Bachellier-Bassi S."/>
            <person name="Firon A."/>
            <person name="Legrand M."/>
            <person name="Diogo D."/>
            <person name="Naulleau C."/>
            <person name="Rossignol T."/>
            <person name="d'Enfert C."/>
        </authorList>
    </citation>
    <scope>FUNCTION</scope>
</reference>
<reference key="11">
    <citation type="journal article" date="2012" name="PLoS Pathog.">
        <title>A GATA transcription factor recruits Hda1 in response to reduced Tor1 signaling to establish a hyphal chromatin state in Candida albicans.</title>
        <authorList>
            <person name="Lu Y."/>
            <person name="Su C."/>
            <person name="Liu H."/>
        </authorList>
    </citation>
    <scope>FUNCTION</scope>
    <scope>INTERACTION WITH HDA1</scope>
    <scope>SUBCELLULAR LOCATION</scope>
    <scope>DNA-BINDING</scope>
</reference>
<reference key="12">
    <citation type="journal article" date="2013" name="Mol. Biol. Cell">
        <title>Reduced TOR signaling sustains hyphal development in Candida albicans by lowering Hog1 basal activity.</title>
        <authorList>
            <person name="Su C."/>
            <person name="Lu Y."/>
            <person name="Liu H."/>
        </authorList>
    </citation>
    <scope>FUNCTION</scope>
    <scope>INDUCTION</scope>
</reference>
<reference key="13">
    <citation type="journal article" date="2013" name="PLoS Biol.">
        <title>White-opaque switching in natural MTLa/alpha isolates of Candida albicans: evolutionary implications for roles in host adaptation, pathogenesis, and sex.</title>
        <authorList>
            <person name="Xie J."/>
            <person name="Tao L."/>
            <person name="Nobile C.J."/>
            <person name="Tong Y."/>
            <person name="Guan G."/>
            <person name="Sun Y."/>
            <person name="Cao C."/>
            <person name="Hernday A.D."/>
            <person name="Johnson A.D."/>
            <person name="Zhang L."/>
            <person name="Bai F.Y."/>
            <person name="Huang G."/>
        </authorList>
    </citation>
    <scope>FUNCTION IN WHITE-OPAQUE SWITCHING</scope>
</reference>
<reference key="14">
    <citation type="journal article" date="2013" name="PLoS Pathog.">
        <title>Genetic control of conventional and pheromone-stimulated biofilm formation in Candida albicans.</title>
        <authorList>
            <person name="Lin C.H."/>
            <person name="Kabrawala S."/>
            <person name="Fox E.P."/>
            <person name="Nobile C.J."/>
            <person name="Johnson A.D."/>
            <person name="Bennett R.J."/>
        </authorList>
    </citation>
    <scope>FUNCTION</scope>
</reference>
<comment type="function">
    <text evidence="3 5 7 8 9 10 11 12 13">Transcription factor required for hyphal growth, biofilm formation, and virulence. Promotes formation of both conventional and pheromone-stimulated biofilms. Binds and recruits HDA1 to promoters of hypha-specific genes in a rapamycin-dependent manner. Involved in the switch between two heritable states, the white and opaque states. These two cell types differ in many characteristics, including cell structure, mating competence, and virulence. Each state is heritable for many generations, and switching between states occurs stochastically at low frequency.</text>
</comment>
<comment type="subunit">
    <text evidence="8">Interacts with HDA1.</text>
</comment>
<comment type="subcellular location">
    <subcellularLocation>
        <location evidence="8">Nucleus</location>
    </subcellularLocation>
</comment>
<comment type="induction">
    <text evidence="4 6 11">Up-regulation during the yeast-to-hypha transition is dependent upon the function of YAK1. HOG1 represses the expression of BRG1 via the transcriptional repressor SKO1. Regulated by TYE7 during late-stage biofilm formation.</text>
</comment>
<comment type="disruption phenotype">
    <text evidence="7">Attenuates virulence in a mouse model of systemic infection.</text>
</comment>
<organism>
    <name type="scientific">Candida albicans (strain SC5314 / ATCC MYA-2876)</name>
    <name type="common">Yeast</name>
    <dbReference type="NCBI Taxonomy" id="237561"/>
    <lineage>
        <taxon>Eukaryota</taxon>
        <taxon>Fungi</taxon>
        <taxon>Dikarya</taxon>
        <taxon>Ascomycota</taxon>
        <taxon>Saccharomycotina</taxon>
        <taxon>Pichiomycetes</taxon>
        <taxon>Debaryomycetaceae</taxon>
        <taxon>Candida/Lodderomyces clade</taxon>
        <taxon>Candida</taxon>
    </lineage>
</organism>
<name>BRG1_CANAL</name>
<accession>Q59LY1</accession>
<accession>A0A1D8PDH2</accession>
<protein>
    <recommendedName>
        <fullName>Biofilm regulator 1</fullName>
    </recommendedName>
</protein>
<gene>
    <name type="primary">BRG1</name>
    <name type="synonym">GAT2</name>
    <name type="ordered locus">CAALFM_C105140WA</name>
    <name type="ORF">CaO19.11538</name>
    <name type="ORF">CaO19.4056</name>
</gene>
<keyword id="KW-0130">Cell adhesion</keyword>
<keyword id="KW-0479">Metal-binding</keyword>
<keyword id="KW-0539">Nucleus</keyword>
<keyword id="KW-1185">Reference proteome</keyword>
<keyword id="KW-0804">Transcription</keyword>
<keyword id="KW-0805">Transcription regulation</keyword>
<keyword id="KW-0843">Virulence</keyword>
<keyword id="KW-0862">Zinc</keyword>
<keyword id="KW-0863">Zinc-finger</keyword>